<name>SRY_MIRAN</name>
<dbReference type="EMBL" id="AY424656">
    <property type="protein sequence ID" value="AAR10367.1"/>
    <property type="molecule type" value="Genomic_DNA"/>
</dbReference>
<dbReference type="SMR" id="Q6TC39"/>
<dbReference type="GO" id="GO:0005737">
    <property type="term" value="C:cytoplasm"/>
    <property type="evidence" value="ECO:0007669"/>
    <property type="project" value="UniProtKB-SubCell"/>
</dbReference>
<dbReference type="GO" id="GO:0016607">
    <property type="term" value="C:nuclear speck"/>
    <property type="evidence" value="ECO:0007669"/>
    <property type="project" value="UniProtKB-SubCell"/>
</dbReference>
<dbReference type="GO" id="GO:0005634">
    <property type="term" value="C:nucleus"/>
    <property type="evidence" value="ECO:0000250"/>
    <property type="project" value="UniProtKB"/>
</dbReference>
<dbReference type="GO" id="GO:0005516">
    <property type="term" value="F:calmodulin binding"/>
    <property type="evidence" value="ECO:0007669"/>
    <property type="project" value="UniProtKB-KW"/>
</dbReference>
<dbReference type="GO" id="GO:0001228">
    <property type="term" value="F:DNA-binding transcription activator activity, RNA polymerase II-specific"/>
    <property type="evidence" value="ECO:0007669"/>
    <property type="project" value="TreeGrafter"/>
</dbReference>
<dbReference type="GO" id="GO:0000978">
    <property type="term" value="F:RNA polymerase II cis-regulatory region sequence-specific DNA binding"/>
    <property type="evidence" value="ECO:0007669"/>
    <property type="project" value="TreeGrafter"/>
</dbReference>
<dbReference type="GO" id="GO:0030154">
    <property type="term" value="P:cell differentiation"/>
    <property type="evidence" value="ECO:0007669"/>
    <property type="project" value="UniProtKB-KW"/>
</dbReference>
<dbReference type="GO" id="GO:0030238">
    <property type="term" value="P:male sex determination"/>
    <property type="evidence" value="ECO:0007669"/>
    <property type="project" value="InterPro"/>
</dbReference>
<dbReference type="GO" id="GO:0007548">
    <property type="term" value="P:sex differentiation"/>
    <property type="evidence" value="ECO:0007669"/>
    <property type="project" value="UniProtKB-KW"/>
</dbReference>
<dbReference type="CDD" id="cd22034">
    <property type="entry name" value="HMG-box_SoxA_SRY"/>
    <property type="match status" value="1"/>
</dbReference>
<dbReference type="FunFam" id="1.10.30.10:FF:000002">
    <property type="entry name" value="transcription factor Sox-2"/>
    <property type="match status" value="1"/>
</dbReference>
<dbReference type="Gene3D" id="1.10.30.10">
    <property type="entry name" value="High mobility group box domain"/>
    <property type="match status" value="1"/>
</dbReference>
<dbReference type="InterPro" id="IPR009071">
    <property type="entry name" value="HMG_box_dom"/>
</dbReference>
<dbReference type="InterPro" id="IPR036910">
    <property type="entry name" value="HMG_box_dom_sf"/>
</dbReference>
<dbReference type="InterPro" id="IPR017253">
    <property type="entry name" value="SRY"/>
</dbReference>
<dbReference type="InterPro" id="IPR050140">
    <property type="entry name" value="SRY-related_HMG-box_TF-like"/>
</dbReference>
<dbReference type="PANTHER" id="PTHR10270:SF161">
    <property type="entry name" value="SEX-DETERMINING REGION Y PROTEIN"/>
    <property type="match status" value="1"/>
</dbReference>
<dbReference type="PANTHER" id="PTHR10270">
    <property type="entry name" value="SOX TRANSCRIPTION FACTOR"/>
    <property type="match status" value="1"/>
</dbReference>
<dbReference type="Pfam" id="PF00505">
    <property type="entry name" value="HMG_box"/>
    <property type="match status" value="1"/>
</dbReference>
<dbReference type="PIRSF" id="PIRSF037653">
    <property type="entry name" value="SRY"/>
    <property type="match status" value="1"/>
</dbReference>
<dbReference type="SMART" id="SM00398">
    <property type="entry name" value="HMG"/>
    <property type="match status" value="1"/>
</dbReference>
<dbReference type="SUPFAM" id="SSF47095">
    <property type="entry name" value="HMG-box"/>
    <property type="match status" value="1"/>
</dbReference>
<dbReference type="PROSITE" id="PS50118">
    <property type="entry name" value="HMG_BOX_2"/>
    <property type="match status" value="1"/>
</dbReference>
<comment type="function">
    <text evidence="1 2">Transcriptional regulator that controls a genetic switch in male development. It is necessary and sufficient for initiating male sex determination by directing the development of supporting cell precursors (pre-Sertoli cells) as Sertoli rather than granulosa cells. Involved in different aspects of gene regulation including promoter activation or repression. Binds to the DNA consensus sequence 5'-[AT]AACAA[AT]-3'. SRY HMG box recognizes DNA by partial intercalation in the minor groove and promotes DNA bending. Also involved in pre-mRNA splicing (By similarity). In male adult brain involved in the maintenance of motor functions of dopaminergic neurons (By similarity).</text>
</comment>
<comment type="subunit">
    <text evidence="2">Interacts with CALM, EP300, HDAC3, KPNB1, ZNF208 isoform KRAB-O, PARP1, SLC9A3R2 and WT1. The interaction with EP300 modulates its DNA-binding activity. The interaction with KPNB1 is sensitive to dissociation by Ran in the GTP-bound form. Interaction with PARP1 impaired its DNA-binding activity.</text>
</comment>
<comment type="subcellular location">
    <subcellularLocation>
        <location evidence="2">Nucleus speckle</location>
    </subcellularLocation>
    <subcellularLocation>
        <location evidence="2">Cytoplasm</location>
    </subcellularLocation>
    <subcellularLocation>
        <location evidence="2">Nucleus</location>
    </subcellularLocation>
</comment>
<comment type="similarity">
    <text evidence="5">Belongs to the SRY family.</text>
</comment>
<comment type="online information" name="Protein Spotlight">
    <link uri="https://www.proteinspotlight.org/back_issues/080"/>
    <text>The tenuous nature of sex - Issue 80 of March 2007</text>
</comment>
<gene>
    <name type="primary">SRY</name>
    <name type="synonym">TDF</name>
</gene>
<proteinExistence type="inferred from homology"/>
<organism>
    <name type="scientific">Mirounga angustirostris</name>
    <name type="common">Northern elephant seal</name>
    <name type="synonym">Macrorhinus angustirostris</name>
    <dbReference type="NCBI Taxonomy" id="9716"/>
    <lineage>
        <taxon>Eukaryota</taxon>
        <taxon>Metazoa</taxon>
        <taxon>Chordata</taxon>
        <taxon>Craniata</taxon>
        <taxon>Vertebrata</taxon>
        <taxon>Euteleostomi</taxon>
        <taxon>Mammalia</taxon>
        <taxon>Eutheria</taxon>
        <taxon>Laurasiatheria</taxon>
        <taxon>Carnivora</taxon>
        <taxon>Caniformia</taxon>
        <taxon>Pinnipedia</taxon>
        <taxon>Phocidae</taxon>
        <taxon>Monachinae</taxon>
        <taxon>Miroungini</taxon>
        <taxon>Mirounga</taxon>
    </lineage>
</organism>
<reference key="1">
    <citation type="submission" date="2003-09" db="EMBL/GenBank/DDBJ databases">
        <title>A phylogeny of the pinnipeds from mitochondrial and single copy nuclear gene sequences.</title>
        <authorList>
            <person name="Kinnear M.W."/>
            <person name="Walker G."/>
            <person name="Amos W."/>
        </authorList>
    </citation>
    <scope>NUCLEOTIDE SEQUENCE [GENOMIC DNA]</scope>
</reference>
<feature type="chain" id="PRO_0000048682" description="Sex-determining region Y protein">
    <location>
        <begin position="1"/>
        <end position="218"/>
    </location>
</feature>
<feature type="DNA-binding region" description="HMG box" evidence="3">
    <location>
        <begin position="54"/>
        <end position="122"/>
    </location>
</feature>
<feature type="region of interest" description="Disordered" evidence="4">
    <location>
        <begin position="33"/>
        <end position="53"/>
    </location>
</feature>
<keyword id="KW-0010">Activator</keyword>
<keyword id="KW-0112">Calmodulin-binding</keyword>
<keyword id="KW-0963">Cytoplasm</keyword>
<keyword id="KW-0221">Differentiation</keyword>
<keyword id="KW-0238">DNA-binding</keyword>
<keyword id="KW-0539">Nucleus</keyword>
<keyword id="KW-0726">Sexual differentiation</keyword>
<keyword id="KW-0804">Transcription</keyword>
<keyword id="KW-0805">Transcription regulation</keyword>
<evidence type="ECO:0000250" key="1">
    <source>
        <dbReference type="UniProtKB" id="P36394"/>
    </source>
</evidence>
<evidence type="ECO:0000250" key="2">
    <source>
        <dbReference type="UniProtKB" id="Q05066"/>
    </source>
</evidence>
<evidence type="ECO:0000255" key="3">
    <source>
        <dbReference type="PROSITE-ProRule" id="PRU00267"/>
    </source>
</evidence>
<evidence type="ECO:0000256" key="4">
    <source>
        <dbReference type="SAM" id="MobiDB-lite"/>
    </source>
</evidence>
<evidence type="ECO:0000305" key="5"/>
<sequence>MFGVLNSSDHRAAVQQRNIPAFGRTSFELWTDSPTSNHRCETGGNGRDSGQNRVRRPMNAFMVWSRDHRRRVALENPQMQNSEISKQLGYQWKMLTEAEKWPFFEEAQRLQATHREKYPDYKYRPRRKALPQKSDKLLPAASSSTLCRQVLVDEKWYPFTYRDSCSRAAHPRMEDHLSSSQPVNIANSLLQQEHHYCSTSLRDSPETLAMHLSADPPF</sequence>
<protein>
    <recommendedName>
        <fullName>Sex-determining region Y protein</fullName>
    </recommendedName>
    <alternativeName>
        <fullName>Testis-determining factor</fullName>
    </alternativeName>
</protein>
<accession>Q6TC39</accession>